<protein>
    <recommendedName>
        <fullName>Cytochrome P450 76A1</fullName>
        <ecNumber>1.14.-.-</ecNumber>
    </recommendedName>
    <alternativeName>
        <fullName>CYPLXXVIA1</fullName>
    </alternativeName>
    <alternativeName>
        <fullName>Cytochrome P-450EG8</fullName>
    </alternativeName>
</protein>
<comment type="cofactor">
    <cofactor evidence="1">
        <name>heme</name>
        <dbReference type="ChEBI" id="CHEBI:30413"/>
    </cofactor>
</comment>
<comment type="similarity">
    <text evidence="2">Belongs to the cytochrome P450 family.</text>
</comment>
<name>C76A1_SOLME</name>
<organism>
    <name type="scientific">Solanum melongena</name>
    <name type="common">Eggplant</name>
    <name type="synonym">Aubergine</name>
    <dbReference type="NCBI Taxonomy" id="223891"/>
    <lineage>
        <taxon>Eukaryota</taxon>
        <taxon>Viridiplantae</taxon>
        <taxon>Streptophyta</taxon>
        <taxon>Embryophyta</taxon>
        <taxon>Tracheophyta</taxon>
        <taxon>Spermatophyta</taxon>
        <taxon>Magnoliopsida</taxon>
        <taxon>eudicotyledons</taxon>
        <taxon>Gunneridae</taxon>
        <taxon>Pentapetalae</taxon>
        <taxon>asterids</taxon>
        <taxon>lamiids</taxon>
        <taxon>Solanales</taxon>
        <taxon>Solanaceae</taxon>
        <taxon>Solanoideae</taxon>
        <taxon>Solaneae</taxon>
        <taxon>Solanum</taxon>
    </lineage>
</organism>
<dbReference type="EC" id="1.14.-.-"/>
<dbReference type="EMBL" id="X71658">
    <property type="protein sequence ID" value="CAA50649.1"/>
    <property type="molecule type" value="mRNA"/>
</dbReference>
<dbReference type="PIR" id="S38535">
    <property type="entry name" value="S38535"/>
</dbReference>
<dbReference type="SMR" id="P37121"/>
<dbReference type="KEGG" id="ag:CAA50649"/>
<dbReference type="GO" id="GO:0020037">
    <property type="term" value="F:heme binding"/>
    <property type="evidence" value="ECO:0007669"/>
    <property type="project" value="InterPro"/>
</dbReference>
<dbReference type="GO" id="GO:0005506">
    <property type="term" value="F:iron ion binding"/>
    <property type="evidence" value="ECO:0007669"/>
    <property type="project" value="InterPro"/>
</dbReference>
<dbReference type="GO" id="GO:0004497">
    <property type="term" value="F:monooxygenase activity"/>
    <property type="evidence" value="ECO:0007669"/>
    <property type="project" value="UniProtKB-KW"/>
</dbReference>
<dbReference type="GO" id="GO:0016705">
    <property type="term" value="F:oxidoreductase activity, acting on paired donors, with incorporation or reduction of molecular oxygen"/>
    <property type="evidence" value="ECO:0007669"/>
    <property type="project" value="InterPro"/>
</dbReference>
<dbReference type="CDD" id="cd11073">
    <property type="entry name" value="CYP76-like"/>
    <property type="match status" value="1"/>
</dbReference>
<dbReference type="FunFam" id="1.10.630.10:FF:000026">
    <property type="entry name" value="Cytochrome P450 82C4"/>
    <property type="match status" value="1"/>
</dbReference>
<dbReference type="Gene3D" id="1.10.630.10">
    <property type="entry name" value="Cytochrome P450"/>
    <property type="match status" value="1"/>
</dbReference>
<dbReference type="InterPro" id="IPR001128">
    <property type="entry name" value="Cyt_P450"/>
</dbReference>
<dbReference type="InterPro" id="IPR017972">
    <property type="entry name" value="Cyt_P450_CS"/>
</dbReference>
<dbReference type="InterPro" id="IPR002401">
    <property type="entry name" value="Cyt_P450_E_grp-I"/>
</dbReference>
<dbReference type="InterPro" id="IPR036396">
    <property type="entry name" value="Cyt_P450_sf"/>
</dbReference>
<dbReference type="PANTHER" id="PTHR47950:SF31">
    <property type="entry name" value="CYTOCHROME P450 76A1-LIKE"/>
    <property type="match status" value="1"/>
</dbReference>
<dbReference type="PANTHER" id="PTHR47950">
    <property type="entry name" value="CYTOCHROME P450, FAMILY 76, SUBFAMILY C, POLYPEPTIDE 5-RELATED"/>
    <property type="match status" value="1"/>
</dbReference>
<dbReference type="Pfam" id="PF00067">
    <property type="entry name" value="p450"/>
    <property type="match status" value="1"/>
</dbReference>
<dbReference type="PRINTS" id="PR00463">
    <property type="entry name" value="EP450I"/>
</dbReference>
<dbReference type="PRINTS" id="PR00385">
    <property type="entry name" value="P450"/>
</dbReference>
<dbReference type="SUPFAM" id="SSF48264">
    <property type="entry name" value="Cytochrome P450"/>
    <property type="match status" value="1"/>
</dbReference>
<dbReference type="PROSITE" id="PS00086">
    <property type="entry name" value="CYTOCHROME_P450"/>
    <property type="match status" value="1"/>
</dbReference>
<proteinExistence type="evidence at transcript level"/>
<evidence type="ECO:0000250" key="1"/>
<evidence type="ECO:0000305" key="2"/>
<sequence>FGNMFDLAGSAPYKKIACLKEKYGPILWLKIGSSMNTMVIQTANSASELFRNHDVSFSDRPIVDVNLAHNYYKGSMALAPYGNYWRFSRRICTVEMFVHKRINETTNIRQESVDKMLRLDEEKASSSGGGGEGIEVTRYMFLASFNMVGNMIFSKDLVTDPESKQGSEFFNAMIGIMEWAGVPNISDIFPCLKMFDVQGLRKKMERDMGKGKEITKKFIEERIEERKKGEKNRSIKDLLDVLIDFEGSGKDEPDKLSEDEITVIILEMFLAGTETTSSSVEWALTELLRHPQAMAKVKLEILQVIGPNKKFEECDIDSLPYMQAVLKEQLRLHPPLPLLIPRKAIQDTKFMGYDIPKGTQVLVNAWAIGRDPEYWDNPFEFKPERFLESKVDVKGQNYELIPFGAGRRMCVGLPLGHRMMHFTFGSLLHEFDWELPHNVSPKSINMEESMGITARKKQPLKVIPKKA</sequence>
<accession>P37121</accession>
<gene>
    <name type="primary">CYP76A1</name>
    <name type="synonym">CYPEG8</name>
</gene>
<feature type="chain" id="PRO_0000052138" description="Cytochrome P450 76A1">
    <location>
        <begin position="1" status="less than"/>
        <end position="467"/>
    </location>
</feature>
<feature type="binding site" description="axial binding residue" evidence="1">
    <location>
        <position position="410"/>
    </location>
    <ligand>
        <name>heme</name>
        <dbReference type="ChEBI" id="CHEBI:30413"/>
    </ligand>
    <ligandPart>
        <name>Fe</name>
        <dbReference type="ChEBI" id="CHEBI:18248"/>
    </ligandPart>
</feature>
<feature type="non-terminal residue">
    <location>
        <position position="1"/>
    </location>
</feature>
<reference key="1">
    <citation type="journal article" date="1993" name="Biochim. Biophys. Acta">
        <title>The cloning of eggplant seedling cDNAs encoding proteins from a novel cytochrome P-450 family (CYP76).</title>
        <authorList>
            <person name="Toguri T."/>
            <person name="Kobayashi O."/>
            <person name="Umemoto N."/>
        </authorList>
    </citation>
    <scope>NUCLEOTIDE SEQUENCE [MRNA]</scope>
    <source>
        <strain>cv. Sinsadoharanasu</strain>
        <tissue>Hypocotyl</tissue>
    </source>
</reference>
<keyword id="KW-0349">Heme</keyword>
<keyword id="KW-0408">Iron</keyword>
<keyword id="KW-0479">Metal-binding</keyword>
<keyword id="KW-0503">Monooxygenase</keyword>
<keyword id="KW-0560">Oxidoreductase</keyword>